<accession>Q2RGL2</accession>
<evidence type="ECO:0000255" key="1">
    <source>
        <dbReference type="HAMAP-Rule" id="MF_01225"/>
    </source>
</evidence>
<evidence type="ECO:0000255" key="2">
    <source>
        <dbReference type="PROSITE-ProRule" id="PRU01266"/>
    </source>
</evidence>
<reference key="1">
    <citation type="journal article" date="2008" name="Environ. Microbiol.">
        <title>The complete genome sequence of Moorella thermoacetica (f. Clostridium thermoaceticum).</title>
        <authorList>
            <person name="Pierce E."/>
            <person name="Xie G."/>
            <person name="Barabote R.D."/>
            <person name="Saunders E."/>
            <person name="Han C.S."/>
            <person name="Detter J.C."/>
            <person name="Richardson P."/>
            <person name="Brettin T.S."/>
            <person name="Das A."/>
            <person name="Ljungdahl L.G."/>
            <person name="Ragsdale S.W."/>
        </authorList>
    </citation>
    <scope>NUCLEOTIDE SEQUENCE [LARGE SCALE GENOMIC DNA]</scope>
    <source>
        <strain>ATCC 39073 / JCM 9320</strain>
    </source>
</reference>
<proteinExistence type="inferred from homology"/>
<protein>
    <recommendedName>
        <fullName evidence="1">GTP 3',8-cyclase</fullName>
        <ecNumber evidence="1">4.1.99.22</ecNumber>
    </recommendedName>
    <alternativeName>
        <fullName evidence="1">Molybdenum cofactor biosynthesis protein A</fullName>
    </alternativeName>
</protein>
<feature type="chain" id="PRO_1000054200" description="GTP 3',8-cyclase">
    <location>
        <begin position="1"/>
        <end position="323"/>
    </location>
</feature>
<feature type="domain" description="Radical SAM core" evidence="2">
    <location>
        <begin position="4"/>
        <end position="226"/>
    </location>
</feature>
<feature type="binding site" evidence="1">
    <location>
        <position position="13"/>
    </location>
    <ligand>
        <name>GTP</name>
        <dbReference type="ChEBI" id="CHEBI:37565"/>
    </ligand>
</feature>
<feature type="binding site" evidence="1">
    <location>
        <position position="20"/>
    </location>
    <ligand>
        <name>[4Fe-4S] cluster</name>
        <dbReference type="ChEBI" id="CHEBI:49883"/>
        <label>1</label>
        <note>4Fe-4S-S-AdoMet</note>
    </ligand>
</feature>
<feature type="binding site" evidence="1">
    <location>
        <position position="24"/>
    </location>
    <ligand>
        <name>[4Fe-4S] cluster</name>
        <dbReference type="ChEBI" id="CHEBI:49883"/>
        <label>1</label>
        <note>4Fe-4S-S-AdoMet</note>
    </ligand>
</feature>
<feature type="binding site" evidence="1">
    <location>
        <position position="26"/>
    </location>
    <ligand>
        <name>S-adenosyl-L-methionine</name>
        <dbReference type="ChEBI" id="CHEBI:59789"/>
    </ligand>
</feature>
<feature type="binding site" evidence="1">
    <location>
        <position position="27"/>
    </location>
    <ligand>
        <name>[4Fe-4S] cluster</name>
        <dbReference type="ChEBI" id="CHEBI:49883"/>
        <label>1</label>
        <note>4Fe-4S-S-AdoMet</note>
    </ligand>
</feature>
<feature type="binding site" evidence="1">
    <location>
        <position position="63"/>
    </location>
    <ligand>
        <name>GTP</name>
        <dbReference type="ChEBI" id="CHEBI:37565"/>
    </ligand>
</feature>
<feature type="binding site" evidence="1">
    <location>
        <position position="67"/>
    </location>
    <ligand>
        <name>S-adenosyl-L-methionine</name>
        <dbReference type="ChEBI" id="CHEBI:59789"/>
    </ligand>
</feature>
<feature type="binding site" evidence="1">
    <location>
        <position position="94"/>
    </location>
    <ligand>
        <name>GTP</name>
        <dbReference type="ChEBI" id="CHEBI:37565"/>
    </ligand>
</feature>
<feature type="binding site" evidence="1">
    <location>
        <position position="118"/>
    </location>
    <ligand>
        <name>S-adenosyl-L-methionine</name>
        <dbReference type="ChEBI" id="CHEBI:59789"/>
    </ligand>
</feature>
<feature type="binding site" evidence="1">
    <location>
        <position position="155"/>
    </location>
    <ligand>
        <name>GTP</name>
        <dbReference type="ChEBI" id="CHEBI:37565"/>
    </ligand>
</feature>
<feature type="binding site" evidence="1">
    <location>
        <position position="189"/>
    </location>
    <ligand>
        <name>S-adenosyl-L-methionine</name>
        <dbReference type="ChEBI" id="CHEBI:59789"/>
    </ligand>
</feature>
<feature type="binding site" evidence="1">
    <location>
        <position position="252"/>
    </location>
    <ligand>
        <name>[4Fe-4S] cluster</name>
        <dbReference type="ChEBI" id="CHEBI:49883"/>
        <label>2</label>
        <note>4Fe-4S-substrate</note>
    </ligand>
</feature>
<feature type="binding site" evidence="1">
    <location>
        <position position="255"/>
    </location>
    <ligand>
        <name>[4Fe-4S] cluster</name>
        <dbReference type="ChEBI" id="CHEBI:49883"/>
        <label>2</label>
        <note>4Fe-4S-substrate</note>
    </ligand>
</feature>
<feature type="binding site" evidence="1">
    <location>
        <begin position="257"/>
        <end position="259"/>
    </location>
    <ligand>
        <name>GTP</name>
        <dbReference type="ChEBI" id="CHEBI:37565"/>
    </ligand>
</feature>
<feature type="binding site" evidence="1">
    <location>
        <position position="269"/>
    </location>
    <ligand>
        <name>[4Fe-4S] cluster</name>
        <dbReference type="ChEBI" id="CHEBI:49883"/>
        <label>2</label>
        <note>4Fe-4S-substrate</note>
    </ligand>
</feature>
<sequence length="323" mass="35584">MQDTFQRQINYLRIAITDRCNLRCRYCMPATGVPLKGHEDILRLEEIATLARVAAGTGISRIRLTGGEPLVRKNVVTLVRELAAIPGLEEISLTTNGIFLGALAFSLKEAGLKRVNISLDTLKKDRYRYITRRGNITSVWQGIRAALAAGLTPVKLNVVITRGFNDDEILDFARLAREEPLHIRFIELMPIGTAAASGTAYVPAEEIKGRISRVYPLEPFPDLATNGPAANFRLVGGRGSVGFITPMSNHFCSRCNRLRLTADGKLRPCLYWDGEIDIKGPLRAGAPETELAAIFARAVSLKPAEHHMENGWRQPRAMSQIGG</sequence>
<dbReference type="EC" id="4.1.99.22" evidence="1"/>
<dbReference type="EMBL" id="CP000232">
    <property type="protein sequence ID" value="ABC20427.1"/>
    <property type="molecule type" value="Genomic_DNA"/>
</dbReference>
<dbReference type="RefSeq" id="YP_430970.1">
    <property type="nucleotide sequence ID" value="NC_007644.1"/>
</dbReference>
<dbReference type="SMR" id="Q2RGL2"/>
<dbReference type="STRING" id="264732.Moth_2135"/>
<dbReference type="EnsemblBacteria" id="ABC20427">
    <property type="protein sequence ID" value="ABC20427"/>
    <property type="gene ID" value="Moth_2135"/>
</dbReference>
<dbReference type="KEGG" id="mta:Moth_2135"/>
<dbReference type="PATRIC" id="fig|264732.11.peg.2320"/>
<dbReference type="eggNOG" id="COG2896">
    <property type="taxonomic scope" value="Bacteria"/>
</dbReference>
<dbReference type="HOGENOM" id="CLU_009273_0_1_9"/>
<dbReference type="OrthoDB" id="9763993at2"/>
<dbReference type="UniPathway" id="UPA00344"/>
<dbReference type="GO" id="GO:0051539">
    <property type="term" value="F:4 iron, 4 sulfur cluster binding"/>
    <property type="evidence" value="ECO:0007669"/>
    <property type="project" value="UniProtKB-UniRule"/>
</dbReference>
<dbReference type="GO" id="GO:0061799">
    <property type="term" value="F:cyclic pyranopterin monophosphate synthase activity"/>
    <property type="evidence" value="ECO:0007669"/>
    <property type="project" value="TreeGrafter"/>
</dbReference>
<dbReference type="GO" id="GO:0061798">
    <property type="term" value="F:GTP 3',8'-cyclase activity"/>
    <property type="evidence" value="ECO:0007669"/>
    <property type="project" value="UniProtKB-UniRule"/>
</dbReference>
<dbReference type="GO" id="GO:0005525">
    <property type="term" value="F:GTP binding"/>
    <property type="evidence" value="ECO:0007669"/>
    <property type="project" value="UniProtKB-UniRule"/>
</dbReference>
<dbReference type="GO" id="GO:0046872">
    <property type="term" value="F:metal ion binding"/>
    <property type="evidence" value="ECO:0007669"/>
    <property type="project" value="UniProtKB-KW"/>
</dbReference>
<dbReference type="GO" id="GO:1904047">
    <property type="term" value="F:S-adenosyl-L-methionine binding"/>
    <property type="evidence" value="ECO:0007669"/>
    <property type="project" value="UniProtKB-UniRule"/>
</dbReference>
<dbReference type="GO" id="GO:0006777">
    <property type="term" value="P:Mo-molybdopterin cofactor biosynthetic process"/>
    <property type="evidence" value="ECO:0007669"/>
    <property type="project" value="UniProtKB-UniRule"/>
</dbReference>
<dbReference type="CDD" id="cd01335">
    <property type="entry name" value="Radical_SAM"/>
    <property type="match status" value="1"/>
</dbReference>
<dbReference type="CDD" id="cd21117">
    <property type="entry name" value="Twitch_MoaA"/>
    <property type="match status" value="1"/>
</dbReference>
<dbReference type="Gene3D" id="3.20.20.70">
    <property type="entry name" value="Aldolase class I"/>
    <property type="match status" value="1"/>
</dbReference>
<dbReference type="HAMAP" id="MF_01225_B">
    <property type="entry name" value="MoaA_B"/>
    <property type="match status" value="1"/>
</dbReference>
<dbReference type="InterPro" id="IPR013785">
    <property type="entry name" value="Aldolase_TIM"/>
</dbReference>
<dbReference type="InterPro" id="IPR006638">
    <property type="entry name" value="Elp3/MiaA/NifB-like_rSAM"/>
</dbReference>
<dbReference type="InterPro" id="IPR013483">
    <property type="entry name" value="MoaA"/>
</dbReference>
<dbReference type="InterPro" id="IPR000385">
    <property type="entry name" value="MoaA_NifB_PqqE_Fe-S-bd_CS"/>
</dbReference>
<dbReference type="InterPro" id="IPR010505">
    <property type="entry name" value="MoaA_twitch"/>
</dbReference>
<dbReference type="InterPro" id="IPR050105">
    <property type="entry name" value="MoCo_biosynth_MoaA/MoaC"/>
</dbReference>
<dbReference type="InterPro" id="IPR007197">
    <property type="entry name" value="rSAM"/>
</dbReference>
<dbReference type="NCBIfam" id="TIGR02666">
    <property type="entry name" value="moaA"/>
    <property type="match status" value="1"/>
</dbReference>
<dbReference type="NCBIfam" id="NF001199">
    <property type="entry name" value="PRK00164.2-1"/>
    <property type="match status" value="1"/>
</dbReference>
<dbReference type="PANTHER" id="PTHR22960:SF0">
    <property type="entry name" value="MOLYBDENUM COFACTOR BIOSYNTHESIS PROTEIN 1"/>
    <property type="match status" value="1"/>
</dbReference>
<dbReference type="PANTHER" id="PTHR22960">
    <property type="entry name" value="MOLYBDOPTERIN COFACTOR SYNTHESIS PROTEIN A"/>
    <property type="match status" value="1"/>
</dbReference>
<dbReference type="Pfam" id="PF13353">
    <property type="entry name" value="Fer4_12"/>
    <property type="match status" value="1"/>
</dbReference>
<dbReference type="Pfam" id="PF06463">
    <property type="entry name" value="Mob_synth_C"/>
    <property type="match status" value="1"/>
</dbReference>
<dbReference type="Pfam" id="PF04055">
    <property type="entry name" value="Radical_SAM"/>
    <property type="match status" value="1"/>
</dbReference>
<dbReference type="SFLD" id="SFLDG01383">
    <property type="entry name" value="cyclic_pyranopterin_phosphate"/>
    <property type="match status" value="1"/>
</dbReference>
<dbReference type="SFLD" id="SFLDG01067">
    <property type="entry name" value="SPASM/twitch_domain_containing"/>
    <property type="match status" value="1"/>
</dbReference>
<dbReference type="SMART" id="SM00729">
    <property type="entry name" value="Elp3"/>
    <property type="match status" value="1"/>
</dbReference>
<dbReference type="SUPFAM" id="SSF102114">
    <property type="entry name" value="Radical SAM enzymes"/>
    <property type="match status" value="1"/>
</dbReference>
<dbReference type="PROSITE" id="PS01305">
    <property type="entry name" value="MOAA_NIFB_PQQE"/>
    <property type="match status" value="1"/>
</dbReference>
<dbReference type="PROSITE" id="PS51918">
    <property type="entry name" value="RADICAL_SAM"/>
    <property type="match status" value="1"/>
</dbReference>
<gene>
    <name evidence="1" type="primary">moaA</name>
    <name type="ordered locus">Moth_2135</name>
</gene>
<organism>
    <name type="scientific">Moorella thermoacetica (strain ATCC 39073 / JCM 9320)</name>
    <dbReference type="NCBI Taxonomy" id="264732"/>
    <lineage>
        <taxon>Bacteria</taxon>
        <taxon>Bacillati</taxon>
        <taxon>Bacillota</taxon>
        <taxon>Clostridia</taxon>
        <taxon>Moorellales</taxon>
        <taxon>Moorellaceae</taxon>
        <taxon>Moorella</taxon>
    </lineage>
</organism>
<name>MOAA_MOOTA</name>
<comment type="function">
    <text evidence="1">Catalyzes the cyclization of GTP to (8S)-3',8-cyclo-7,8-dihydroguanosine 5'-triphosphate.</text>
</comment>
<comment type="catalytic activity">
    <reaction evidence="1">
        <text>GTP + AH2 + S-adenosyl-L-methionine = (8S)-3',8-cyclo-7,8-dihydroguanosine 5'-triphosphate + 5'-deoxyadenosine + L-methionine + A + H(+)</text>
        <dbReference type="Rhea" id="RHEA:49576"/>
        <dbReference type="ChEBI" id="CHEBI:13193"/>
        <dbReference type="ChEBI" id="CHEBI:15378"/>
        <dbReference type="ChEBI" id="CHEBI:17319"/>
        <dbReference type="ChEBI" id="CHEBI:17499"/>
        <dbReference type="ChEBI" id="CHEBI:37565"/>
        <dbReference type="ChEBI" id="CHEBI:57844"/>
        <dbReference type="ChEBI" id="CHEBI:59789"/>
        <dbReference type="ChEBI" id="CHEBI:131766"/>
        <dbReference type="EC" id="4.1.99.22"/>
    </reaction>
</comment>
<comment type="cofactor">
    <cofactor evidence="1">
        <name>[4Fe-4S] cluster</name>
        <dbReference type="ChEBI" id="CHEBI:49883"/>
    </cofactor>
    <text evidence="1">Binds 2 [4Fe-4S] clusters. Binds 1 [4Fe-4S] cluster coordinated with 3 cysteines and an exchangeable S-adenosyl-L-methionine and 1 [4Fe-4S] cluster coordinated with 3 cysteines and the GTP-derived substrate.</text>
</comment>
<comment type="pathway">
    <text evidence="1">Cofactor biosynthesis; molybdopterin biosynthesis.</text>
</comment>
<comment type="subunit">
    <text evidence="1">Monomer and homodimer.</text>
</comment>
<comment type="similarity">
    <text evidence="1">Belongs to the radical SAM superfamily. MoaA family.</text>
</comment>
<keyword id="KW-0004">4Fe-4S</keyword>
<keyword id="KW-0342">GTP-binding</keyword>
<keyword id="KW-0408">Iron</keyword>
<keyword id="KW-0411">Iron-sulfur</keyword>
<keyword id="KW-0456">Lyase</keyword>
<keyword id="KW-0479">Metal-binding</keyword>
<keyword id="KW-0501">Molybdenum cofactor biosynthesis</keyword>
<keyword id="KW-0547">Nucleotide-binding</keyword>
<keyword id="KW-0949">S-adenosyl-L-methionine</keyword>